<name>RSXE_ECO7I</name>
<keyword id="KW-0997">Cell inner membrane</keyword>
<keyword id="KW-1003">Cell membrane</keyword>
<keyword id="KW-0249">Electron transport</keyword>
<keyword id="KW-0472">Membrane</keyword>
<keyword id="KW-1278">Translocase</keyword>
<keyword id="KW-0812">Transmembrane</keyword>
<keyword id="KW-1133">Transmembrane helix</keyword>
<keyword id="KW-0813">Transport</keyword>
<accession>B7NU01</accession>
<reference key="1">
    <citation type="journal article" date="2009" name="PLoS Genet.">
        <title>Organised genome dynamics in the Escherichia coli species results in highly diverse adaptive paths.</title>
        <authorList>
            <person name="Touchon M."/>
            <person name="Hoede C."/>
            <person name="Tenaillon O."/>
            <person name="Barbe V."/>
            <person name="Baeriswyl S."/>
            <person name="Bidet P."/>
            <person name="Bingen E."/>
            <person name="Bonacorsi S."/>
            <person name="Bouchier C."/>
            <person name="Bouvet O."/>
            <person name="Calteau A."/>
            <person name="Chiapello H."/>
            <person name="Clermont O."/>
            <person name="Cruveiller S."/>
            <person name="Danchin A."/>
            <person name="Diard M."/>
            <person name="Dossat C."/>
            <person name="Karoui M.E."/>
            <person name="Frapy E."/>
            <person name="Garry L."/>
            <person name="Ghigo J.M."/>
            <person name="Gilles A.M."/>
            <person name="Johnson J."/>
            <person name="Le Bouguenec C."/>
            <person name="Lescat M."/>
            <person name="Mangenot S."/>
            <person name="Martinez-Jehanne V."/>
            <person name="Matic I."/>
            <person name="Nassif X."/>
            <person name="Oztas S."/>
            <person name="Petit M.A."/>
            <person name="Pichon C."/>
            <person name="Rouy Z."/>
            <person name="Ruf C.S."/>
            <person name="Schneider D."/>
            <person name="Tourret J."/>
            <person name="Vacherie B."/>
            <person name="Vallenet D."/>
            <person name="Medigue C."/>
            <person name="Rocha E.P.C."/>
            <person name="Denamur E."/>
        </authorList>
    </citation>
    <scope>NUCLEOTIDE SEQUENCE [LARGE SCALE GENOMIC DNA]</scope>
    <source>
        <strain>IAI39 / ExPEC</strain>
    </source>
</reference>
<organism>
    <name type="scientific">Escherichia coli O7:K1 (strain IAI39 / ExPEC)</name>
    <dbReference type="NCBI Taxonomy" id="585057"/>
    <lineage>
        <taxon>Bacteria</taxon>
        <taxon>Pseudomonadati</taxon>
        <taxon>Pseudomonadota</taxon>
        <taxon>Gammaproteobacteria</taxon>
        <taxon>Enterobacterales</taxon>
        <taxon>Enterobacteriaceae</taxon>
        <taxon>Escherichia</taxon>
    </lineage>
</organism>
<evidence type="ECO:0000255" key="1">
    <source>
        <dbReference type="HAMAP-Rule" id="MF_00478"/>
    </source>
</evidence>
<feature type="chain" id="PRO_1000125848" description="Ion-translocating oxidoreductase complex subunit E">
    <location>
        <begin position="1"/>
        <end position="231"/>
    </location>
</feature>
<feature type="transmembrane region" description="Helical" evidence="1">
    <location>
        <begin position="18"/>
        <end position="38"/>
    </location>
</feature>
<feature type="transmembrane region" description="Helical" evidence="1">
    <location>
        <begin position="39"/>
        <end position="59"/>
    </location>
</feature>
<feature type="transmembrane region" description="Helical" evidence="1">
    <location>
        <begin position="63"/>
        <end position="83"/>
    </location>
</feature>
<feature type="transmembrane region" description="Helical" evidence="1">
    <location>
        <begin position="86"/>
        <end position="106"/>
    </location>
</feature>
<feature type="transmembrane region" description="Helical" evidence="1">
    <location>
        <begin position="125"/>
        <end position="145"/>
    </location>
</feature>
<feature type="transmembrane region" description="Helical" evidence="1">
    <location>
        <begin position="182"/>
        <end position="202"/>
    </location>
</feature>
<comment type="function">
    <text evidence="1">Part of a membrane-bound complex that couples electron transfer with translocation of ions across the membrane. Required to maintain the reduced state of SoxR.</text>
</comment>
<comment type="subunit">
    <text evidence="1">The complex is composed of six subunits: RsxA, RsxB, RsxC, RsxD, RsxE and RsxG.</text>
</comment>
<comment type="subcellular location">
    <subcellularLocation>
        <location evidence="1">Cell inner membrane</location>
        <topology evidence="1">Multi-pass membrane protein</topology>
    </subcellularLocation>
</comment>
<comment type="similarity">
    <text evidence="1">Belongs to the NqrDE/RnfAE family.</text>
</comment>
<dbReference type="EC" id="7.-.-.-" evidence="1"/>
<dbReference type="EMBL" id="CU928164">
    <property type="protein sequence ID" value="CAR17557.1"/>
    <property type="molecule type" value="Genomic_DNA"/>
</dbReference>
<dbReference type="RefSeq" id="WP_001289643.1">
    <property type="nucleotide sequence ID" value="NC_011750.1"/>
</dbReference>
<dbReference type="RefSeq" id="YP_002407429.1">
    <property type="nucleotide sequence ID" value="NC_011750.1"/>
</dbReference>
<dbReference type="SMR" id="B7NU01"/>
<dbReference type="STRING" id="585057.ECIAI39_1424"/>
<dbReference type="KEGG" id="ect:ECIAI39_1424"/>
<dbReference type="PATRIC" id="fig|585057.6.peg.1490"/>
<dbReference type="HOGENOM" id="CLU_046659_1_0_6"/>
<dbReference type="Proteomes" id="UP000000749">
    <property type="component" value="Chromosome"/>
</dbReference>
<dbReference type="GO" id="GO:0005886">
    <property type="term" value="C:plasma membrane"/>
    <property type="evidence" value="ECO:0007669"/>
    <property type="project" value="UniProtKB-SubCell"/>
</dbReference>
<dbReference type="GO" id="GO:0022900">
    <property type="term" value="P:electron transport chain"/>
    <property type="evidence" value="ECO:0007669"/>
    <property type="project" value="UniProtKB-UniRule"/>
</dbReference>
<dbReference type="HAMAP" id="MF_00478">
    <property type="entry name" value="RsxE_RnfE"/>
    <property type="match status" value="1"/>
</dbReference>
<dbReference type="InterPro" id="IPR003667">
    <property type="entry name" value="NqrDE/RnfAE"/>
</dbReference>
<dbReference type="InterPro" id="IPR010968">
    <property type="entry name" value="RnfE"/>
</dbReference>
<dbReference type="NCBIfam" id="NF009070">
    <property type="entry name" value="PRK12405.1"/>
    <property type="match status" value="1"/>
</dbReference>
<dbReference type="NCBIfam" id="TIGR01948">
    <property type="entry name" value="rnfE"/>
    <property type="match status" value="1"/>
</dbReference>
<dbReference type="PANTHER" id="PTHR30586">
    <property type="entry name" value="ELECTRON TRANSPORT COMPLEX PROTEIN RNFE"/>
    <property type="match status" value="1"/>
</dbReference>
<dbReference type="PANTHER" id="PTHR30586:SF0">
    <property type="entry name" value="ION-TRANSLOCATING OXIDOREDUCTASE COMPLEX SUBUNIT E"/>
    <property type="match status" value="1"/>
</dbReference>
<dbReference type="Pfam" id="PF02508">
    <property type="entry name" value="Rnf-Nqr"/>
    <property type="match status" value="1"/>
</dbReference>
<dbReference type="PIRSF" id="PIRSF006102">
    <property type="entry name" value="NQR_DE"/>
    <property type="match status" value="1"/>
</dbReference>
<protein>
    <recommendedName>
        <fullName evidence="1">Ion-translocating oxidoreductase complex subunit E</fullName>
        <ecNumber evidence="1">7.-.-.-</ecNumber>
    </recommendedName>
    <alternativeName>
        <fullName evidence="1">Rsx electron transport complex subunit E</fullName>
    </alternativeName>
</protein>
<proteinExistence type="inferred from homology"/>
<gene>
    <name evidence="1" type="primary">rsxE</name>
    <name type="ordered locus">ECIAI39_1424</name>
</gene>
<sequence>MSEIKDVIVQGLWKNNSALVQLLGLCPLLAVTSTATNALGLGLATTLVLTLTNLTISTLRHWTPAEIRIPIYVMIIASVVSAVQMLINAYAFGLYQSLGIFIPLIVTNCIVVGRAEAFAAKKGPALSALDGFSIGMGATCAMFVLGSLREIIGNGTLFDGADALLGSWAKVLRLEIFHTDSPFLLAMLPPSAFIGLGLMLAGKYLIDERMKKRRAEAAAERALPNGETGNV</sequence>